<organism>
    <name type="scientific">Homo sapiens</name>
    <name type="common">Human</name>
    <dbReference type="NCBI Taxonomy" id="9606"/>
    <lineage>
        <taxon>Eukaryota</taxon>
        <taxon>Metazoa</taxon>
        <taxon>Chordata</taxon>
        <taxon>Craniata</taxon>
        <taxon>Vertebrata</taxon>
        <taxon>Euteleostomi</taxon>
        <taxon>Mammalia</taxon>
        <taxon>Eutheria</taxon>
        <taxon>Euarchontoglires</taxon>
        <taxon>Primates</taxon>
        <taxon>Haplorrhini</taxon>
        <taxon>Catarrhini</taxon>
        <taxon>Hominidae</taxon>
        <taxon>Homo</taxon>
    </lineage>
</organism>
<comment type="alternative products">
    <event type="alternative splicing"/>
    <isoform>
        <id>A6PVY3-1</id>
        <name>1</name>
        <sequence type="displayed"/>
    </isoform>
    <isoform>
        <id>A6PVY3-2</id>
        <name>2</name>
        <sequence type="described" ref="VSP_032476 VSP_032477"/>
    </isoform>
</comment>
<comment type="similarity">
    <text evidence="3">Belongs to the FAM177 family.</text>
</comment>
<evidence type="ECO:0000256" key="1">
    <source>
        <dbReference type="SAM" id="MobiDB-lite"/>
    </source>
</evidence>
<evidence type="ECO:0000303" key="2">
    <source>
    </source>
</evidence>
<evidence type="ECO:0000305" key="3"/>
<reference key="1">
    <citation type="journal article" date="2004" name="Nat. Genet.">
        <title>Complete sequencing and characterization of 21,243 full-length human cDNAs.</title>
        <authorList>
            <person name="Ota T."/>
            <person name="Suzuki Y."/>
            <person name="Nishikawa T."/>
            <person name="Otsuki T."/>
            <person name="Sugiyama T."/>
            <person name="Irie R."/>
            <person name="Wakamatsu A."/>
            <person name="Hayashi K."/>
            <person name="Sato H."/>
            <person name="Nagai K."/>
            <person name="Kimura K."/>
            <person name="Makita H."/>
            <person name="Sekine M."/>
            <person name="Obayashi M."/>
            <person name="Nishi T."/>
            <person name="Shibahara T."/>
            <person name="Tanaka T."/>
            <person name="Ishii S."/>
            <person name="Yamamoto J."/>
            <person name="Saito K."/>
            <person name="Kawai Y."/>
            <person name="Isono Y."/>
            <person name="Nakamura Y."/>
            <person name="Nagahari K."/>
            <person name="Murakami K."/>
            <person name="Yasuda T."/>
            <person name="Iwayanagi T."/>
            <person name="Wagatsuma M."/>
            <person name="Shiratori A."/>
            <person name="Sudo H."/>
            <person name="Hosoiri T."/>
            <person name="Kaku Y."/>
            <person name="Kodaira H."/>
            <person name="Kondo H."/>
            <person name="Sugawara M."/>
            <person name="Takahashi M."/>
            <person name="Kanda K."/>
            <person name="Yokoi T."/>
            <person name="Furuya T."/>
            <person name="Kikkawa E."/>
            <person name="Omura Y."/>
            <person name="Abe K."/>
            <person name="Kamihara K."/>
            <person name="Katsuta N."/>
            <person name="Sato K."/>
            <person name="Tanikawa M."/>
            <person name="Yamazaki M."/>
            <person name="Ninomiya K."/>
            <person name="Ishibashi T."/>
            <person name="Yamashita H."/>
            <person name="Murakawa K."/>
            <person name="Fujimori K."/>
            <person name="Tanai H."/>
            <person name="Kimata M."/>
            <person name="Watanabe M."/>
            <person name="Hiraoka S."/>
            <person name="Chiba Y."/>
            <person name="Ishida S."/>
            <person name="Ono Y."/>
            <person name="Takiguchi S."/>
            <person name="Watanabe S."/>
            <person name="Yosida M."/>
            <person name="Hotuta T."/>
            <person name="Kusano J."/>
            <person name="Kanehori K."/>
            <person name="Takahashi-Fujii A."/>
            <person name="Hara H."/>
            <person name="Tanase T.-O."/>
            <person name="Nomura Y."/>
            <person name="Togiya S."/>
            <person name="Komai F."/>
            <person name="Hara R."/>
            <person name="Takeuchi K."/>
            <person name="Arita M."/>
            <person name="Imose N."/>
            <person name="Musashino K."/>
            <person name="Yuuki H."/>
            <person name="Oshima A."/>
            <person name="Sasaki N."/>
            <person name="Aotsuka S."/>
            <person name="Yoshikawa Y."/>
            <person name="Matsunawa H."/>
            <person name="Ichihara T."/>
            <person name="Shiohata N."/>
            <person name="Sano S."/>
            <person name="Moriya S."/>
            <person name="Momiyama H."/>
            <person name="Satoh N."/>
            <person name="Takami S."/>
            <person name="Terashima Y."/>
            <person name="Suzuki O."/>
            <person name="Nakagawa S."/>
            <person name="Senoh A."/>
            <person name="Mizoguchi H."/>
            <person name="Goto Y."/>
            <person name="Shimizu F."/>
            <person name="Wakebe H."/>
            <person name="Hishigaki H."/>
            <person name="Watanabe T."/>
            <person name="Sugiyama A."/>
            <person name="Takemoto M."/>
            <person name="Kawakami B."/>
            <person name="Yamazaki M."/>
            <person name="Watanabe K."/>
            <person name="Kumagai A."/>
            <person name="Itakura S."/>
            <person name="Fukuzumi Y."/>
            <person name="Fujimori Y."/>
            <person name="Komiyama M."/>
            <person name="Tashiro H."/>
            <person name="Tanigami A."/>
            <person name="Fujiwara T."/>
            <person name="Ono T."/>
            <person name="Yamada K."/>
            <person name="Fujii Y."/>
            <person name="Ozaki K."/>
            <person name="Hirao M."/>
            <person name="Ohmori Y."/>
            <person name="Kawabata A."/>
            <person name="Hikiji T."/>
            <person name="Kobatake N."/>
            <person name="Inagaki H."/>
            <person name="Ikema Y."/>
            <person name="Okamoto S."/>
            <person name="Okitani R."/>
            <person name="Kawakami T."/>
            <person name="Noguchi S."/>
            <person name="Itoh T."/>
            <person name="Shigeta K."/>
            <person name="Senba T."/>
            <person name="Matsumura K."/>
            <person name="Nakajima Y."/>
            <person name="Mizuno T."/>
            <person name="Morinaga M."/>
            <person name="Sasaki M."/>
            <person name="Togashi T."/>
            <person name="Oyama M."/>
            <person name="Hata H."/>
            <person name="Watanabe M."/>
            <person name="Komatsu T."/>
            <person name="Mizushima-Sugano J."/>
            <person name="Satoh T."/>
            <person name="Shirai Y."/>
            <person name="Takahashi Y."/>
            <person name="Nakagawa K."/>
            <person name="Okumura K."/>
            <person name="Nagase T."/>
            <person name="Nomura N."/>
            <person name="Kikuchi H."/>
            <person name="Masuho Y."/>
            <person name="Yamashita R."/>
            <person name="Nakai K."/>
            <person name="Yada T."/>
            <person name="Nakamura Y."/>
            <person name="Ohara O."/>
            <person name="Isogai T."/>
            <person name="Sugano S."/>
        </authorList>
    </citation>
    <scope>NUCLEOTIDE SEQUENCE [LARGE SCALE MRNA] (ISOFORM 2)</scope>
    <source>
        <tissue>Peripheral blood</tissue>
    </source>
</reference>
<reference key="2">
    <citation type="journal article" date="2006" name="Nature">
        <title>The DNA sequence and biological annotation of human chromosome 1.</title>
        <authorList>
            <person name="Gregory S.G."/>
            <person name="Barlow K.F."/>
            <person name="McLay K.E."/>
            <person name="Kaul R."/>
            <person name="Swarbreck D."/>
            <person name="Dunham A."/>
            <person name="Scott C.E."/>
            <person name="Howe K.L."/>
            <person name="Woodfine K."/>
            <person name="Spencer C.C.A."/>
            <person name="Jones M.C."/>
            <person name="Gillson C."/>
            <person name="Searle S."/>
            <person name="Zhou Y."/>
            <person name="Kokocinski F."/>
            <person name="McDonald L."/>
            <person name="Evans R."/>
            <person name="Phillips K."/>
            <person name="Atkinson A."/>
            <person name="Cooper R."/>
            <person name="Jones C."/>
            <person name="Hall R.E."/>
            <person name="Andrews T.D."/>
            <person name="Lloyd C."/>
            <person name="Ainscough R."/>
            <person name="Almeida J.P."/>
            <person name="Ambrose K.D."/>
            <person name="Anderson F."/>
            <person name="Andrew R.W."/>
            <person name="Ashwell R.I.S."/>
            <person name="Aubin K."/>
            <person name="Babbage A.K."/>
            <person name="Bagguley C.L."/>
            <person name="Bailey J."/>
            <person name="Beasley H."/>
            <person name="Bethel G."/>
            <person name="Bird C.P."/>
            <person name="Bray-Allen S."/>
            <person name="Brown J.Y."/>
            <person name="Brown A.J."/>
            <person name="Buckley D."/>
            <person name="Burton J."/>
            <person name="Bye J."/>
            <person name="Carder C."/>
            <person name="Chapman J.C."/>
            <person name="Clark S.Y."/>
            <person name="Clarke G."/>
            <person name="Clee C."/>
            <person name="Cobley V."/>
            <person name="Collier R.E."/>
            <person name="Corby N."/>
            <person name="Coville G.J."/>
            <person name="Davies J."/>
            <person name="Deadman R."/>
            <person name="Dunn M."/>
            <person name="Earthrowl M."/>
            <person name="Ellington A.G."/>
            <person name="Errington H."/>
            <person name="Frankish A."/>
            <person name="Frankland J."/>
            <person name="French L."/>
            <person name="Garner P."/>
            <person name="Garnett J."/>
            <person name="Gay L."/>
            <person name="Ghori M.R.J."/>
            <person name="Gibson R."/>
            <person name="Gilby L.M."/>
            <person name="Gillett W."/>
            <person name="Glithero R.J."/>
            <person name="Grafham D.V."/>
            <person name="Griffiths C."/>
            <person name="Griffiths-Jones S."/>
            <person name="Grocock R."/>
            <person name="Hammond S."/>
            <person name="Harrison E.S.I."/>
            <person name="Hart E."/>
            <person name="Haugen E."/>
            <person name="Heath P.D."/>
            <person name="Holmes S."/>
            <person name="Holt K."/>
            <person name="Howden P.J."/>
            <person name="Hunt A.R."/>
            <person name="Hunt S.E."/>
            <person name="Hunter G."/>
            <person name="Isherwood J."/>
            <person name="James R."/>
            <person name="Johnson C."/>
            <person name="Johnson D."/>
            <person name="Joy A."/>
            <person name="Kay M."/>
            <person name="Kershaw J.K."/>
            <person name="Kibukawa M."/>
            <person name="Kimberley A.M."/>
            <person name="King A."/>
            <person name="Knights A.J."/>
            <person name="Lad H."/>
            <person name="Laird G."/>
            <person name="Lawlor S."/>
            <person name="Leongamornlert D.A."/>
            <person name="Lloyd D.M."/>
            <person name="Loveland J."/>
            <person name="Lovell J."/>
            <person name="Lush M.J."/>
            <person name="Lyne R."/>
            <person name="Martin S."/>
            <person name="Mashreghi-Mohammadi M."/>
            <person name="Matthews L."/>
            <person name="Matthews N.S.W."/>
            <person name="McLaren S."/>
            <person name="Milne S."/>
            <person name="Mistry S."/>
            <person name="Moore M.J.F."/>
            <person name="Nickerson T."/>
            <person name="O'Dell C.N."/>
            <person name="Oliver K."/>
            <person name="Palmeiri A."/>
            <person name="Palmer S.A."/>
            <person name="Parker A."/>
            <person name="Patel D."/>
            <person name="Pearce A.V."/>
            <person name="Peck A.I."/>
            <person name="Pelan S."/>
            <person name="Phelps K."/>
            <person name="Phillimore B.J."/>
            <person name="Plumb R."/>
            <person name="Rajan J."/>
            <person name="Raymond C."/>
            <person name="Rouse G."/>
            <person name="Saenphimmachak C."/>
            <person name="Sehra H.K."/>
            <person name="Sheridan E."/>
            <person name="Shownkeen R."/>
            <person name="Sims S."/>
            <person name="Skuce C.D."/>
            <person name="Smith M."/>
            <person name="Steward C."/>
            <person name="Subramanian S."/>
            <person name="Sycamore N."/>
            <person name="Tracey A."/>
            <person name="Tromans A."/>
            <person name="Van Helmond Z."/>
            <person name="Wall M."/>
            <person name="Wallis J.M."/>
            <person name="White S."/>
            <person name="Whitehead S.L."/>
            <person name="Wilkinson J.E."/>
            <person name="Willey D.L."/>
            <person name="Williams H."/>
            <person name="Wilming L."/>
            <person name="Wray P.W."/>
            <person name="Wu Z."/>
            <person name="Coulson A."/>
            <person name="Vaudin M."/>
            <person name="Sulston J.E."/>
            <person name="Durbin R.M."/>
            <person name="Hubbard T."/>
            <person name="Wooster R."/>
            <person name="Dunham I."/>
            <person name="Carter N.P."/>
            <person name="McVean G."/>
            <person name="Ross M.T."/>
            <person name="Harrow J."/>
            <person name="Olson M.V."/>
            <person name="Beck S."/>
            <person name="Rogers J."/>
            <person name="Bentley D.R."/>
        </authorList>
    </citation>
    <scope>NUCLEOTIDE SEQUENCE [LARGE SCALE GENOMIC DNA]</scope>
</reference>
<dbReference type="EMBL" id="AK125494">
    <property type="protein sequence ID" value="BAC86182.1"/>
    <property type="molecule type" value="mRNA"/>
</dbReference>
<dbReference type="EMBL" id="AL392172">
    <property type="status" value="NOT_ANNOTATED_CDS"/>
    <property type="molecule type" value="Genomic_DNA"/>
</dbReference>
<dbReference type="CCDS" id="CCDS1535.2">
    <molecule id="A6PVY3-1"/>
</dbReference>
<dbReference type="RefSeq" id="NP_001311009.1">
    <molecule id="A6PVY3-1"/>
    <property type="nucleotide sequence ID" value="NM_001324080.2"/>
</dbReference>
<dbReference type="RefSeq" id="NP_001381274.1">
    <molecule id="A6PVY3-1"/>
    <property type="nucleotide sequence ID" value="NM_001394345.1"/>
</dbReference>
<dbReference type="RefSeq" id="NP_997351.2">
    <molecule id="A6PVY3-1"/>
    <property type="nucleotide sequence ID" value="NM_207468.3"/>
</dbReference>
<dbReference type="RefSeq" id="XP_016856768.1">
    <molecule id="A6PVY3-1"/>
    <property type="nucleotide sequence ID" value="XM_017001279.2"/>
</dbReference>
<dbReference type="RefSeq" id="XP_016856769.1">
    <property type="nucleotide sequence ID" value="XM_017001280.1"/>
</dbReference>
<dbReference type="RefSeq" id="XP_016856770.1">
    <molecule id="A6PVY3-1"/>
    <property type="nucleotide sequence ID" value="XM_017001281.2"/>
</dbReference>
<dbReference type="RefSeq" id="XP_016856771.1">
    <molecule id="A6PVY3-1"/>
    <property type="nucleotide sequence ID" value="XM_017001282.2"/>
</dbReference>
<dbReference type="BioGRID" id="134775">
    <property type="interactions" value="3"/>
</dbReference>
<dbReference type="FunCoup" id="A6PVY3">
    <property type="interactions" value="1"/>
</dbReference>
<dbReference type="IntAct" id="A6PVY3">
    <property type="interactions" value="2"/>
</dbReference>
<dbReference type="STRING" id="9606.ENSP00000414451"/>
<dbReference type="GlyCosmos" id="A6PVY3">
    <property type="glycosylation" value="2 sites, 1 glycan"/>
</dbReference>
<dbReference type="GlyGen" id="A6PVY3">
    <property type="glycosylation" value="2 sites, 1 O-linked glycan (2 sites)"/>
</dbReference>
<dbReference type="iPTMnet" id="A6PVY3"/>
<dbReference type="PhosphoSitePlus" id="A6PVY3"/>
<dbReference type="SwissPalm" id="A6PVY3"/>
<dbReference type="BioMuta" id="FAM177B"/>
<dbReference type="MassIVE" id="A6PVY3"/>
<dbReference type="PaxDb" id="9606-ENSP00000414451"/>
<dbReference type="PeptideAtlas" id="A6PVY3"/>
<dbReference type="Antibodypedia" id="71238">
    <property type="antibodies" value="30 antibodies from 11 providers"/>
</dbReference>
<dbReference type="DNASU" id="400823"/>
<dbReference type="Ensembl" id="ENST00000360827.6">
    <molecule id="A6PVY3-1"/>
    <property type="protein sequence ID" value="ENSP00000354070.2"/>
    <property type="gene ID" value="ENSG00000197520.11"/>
</dbReference>
<dbReference type="Ensembl" id="ENST00000391880.6">
    <molecule id="A6PVY3-2"/>
    <property type="protein sequence ID" value="ENSP00000375752.2"/>
    <property type="gene ID" value="ENSG00000197520.11"/>
</dbReference>
<dbReference type="Ensembl" id="ENST00000445590.4">
    <molecule id="A6PVY3-1"/>
    <property type="protein sequence ID" value="ENSP00000414451.2"/>
    <property type="gene ID" value="ENSG00000197520.11"/>
</dbReference>
<dbReference type="GeneID" id="400823"/>
<dbReference type="KEGG" id="hsa:400823"/>
<dbReference type="MANE-Select" id="ENST00000445590.4">
    <property type="protein sequence ID" value="ENSP00000414451.2"/>
    <property type="RefSeq nucleotide sequence ID" value="NM_001394345.1"/>
    <property type="RefSeq protein sequence ID" value="NP_001381274.1"/>
</dbReference>
<dbReference type="UCSC" id="uc009xeb.4">
    <molecule id="A6PVY3-1"/>
    <property type="organism name" value="human"/>
</dbReference>
<dbReference type="AGR" id="HGNC:34395"/>
<dbReference type="CTD" id="400823"/>
<dbReference type="GeneCards" id="FAM177B"/>
<dbReference type="HGNC" id="HGNC:34395">
    <property type="gene designation" value="FAM177B"/>
</dbReference>
<dbReference type="HPA" id="ENSG00000197520">
    <property type="expression patterns" value="Tissue enhanced (intestine, stomach)"/>
</dbReference>
<dbReference type="neXtProt" id="NX_A6PVY3"/>
<dbReference type="OpenTargets" id="ENSG00000197520"/>
<dbReference type="PharmGKB" id="PA162387394"/>
<dbReference type="VEuPathDB" id="HostDB:ENSG00000197520"/>
<dbReference type="eggNOG" id="ENOG502S4DM">
    <property type="taxonomic scope" value="Eukaryota"/>
</dbReference>
<dbReference type="GeneTree" id="ENSGT00390000016736"/>
<dbReference type="HOGENOM" id="CLU_081605_1_0_1"/>
<dbReference type="InParanoid" id="A6PVY3"/>
<dbReference type="OMA" id="YYRTQNQ"/>
<dbReference type="OrthoDB" id="45963at2759"/>
<dbReference type="PAN-GO" id="A6PVY3">
    <property type="GO annotations" value="0 GO annotations based on evolutionary models"/>
</dbReference>
<dbReference type="PhylomeDB" id="A6PVY3"/>
<dbReference type="TreeFam" id="TF326916"/>
<dbReference type="PathwayCommons" id="A6PVY3"/>
<dbReference type="SignaLink" id="A6PVY3"/>
<dbReference type="BioGRID-ORCS" id="400823">
    <property type="hits" value="21 hits in 1141 CRISPR screens"/>
</dbReference>
<dbReference type="ChiTaRS" id="FAM177B">
    <property type="organism name" value="human"/>
</dbReference>
<dbReference type="GenomeRNAi" id="400823"/>
<dbReference type="Pharos" id="A6PVY3">
    <property type="development level" value="Tdark"/>
</dbReference>
<dbReference type="PRO" id="PR:A6PVY3"/>
<dbReference type="Proteomes" id="UP000005640">
    <property type="component" value="Chromosome 1"/>
</dbReference>
<dbReference type="RNAct" id="A6PVY3">
    <property type="molecule type" value="protein"/>
</dbReference>
<dbReference type="Bgee" id="ENSG00000197520">
    <property type="expression patterns" value="Expressed in male germ line stem cell (sensu Vertebrata) in testis and 107 other cell types or tissues"/>
</dbReference>
<dbReference type="ExpressionAtlas" id="A6PVY3">
    <property type="expression patterns" value="baseline and differential"/>
</dbReference>
<dbReference type="InterPro" id="IPR028260">
    <property type="entry name" value="FAM177"/>
</dbReference>
<dbReference type="PANTHER" id="PTHR31206">
    <property type="entry name" value="LP10445P"/>
    <property type="match status" value="1"/>
</dbReference>
<dbReference type="PANTHER" id="PTHR31206:SF9">
    <property type="entry name" value="PROTEIN FAM177B"/>
    <property type="match status" value="1"/>
</dbReference>
<dbReference type="Pfam" id="PF14774">
    <property type="entry name" value="FAM177"/>
    <property type="match status" value="1"/>
</dbReference>
<protein>
    <recommendedName>
        <fullName>Protein FAM177B</fullName>
    </recommendedName>
</protein>
<accession>A6PVY3</accession>
<accession>Q6ZUN8</accession>
<keyword id="KW-0025">Alternative splicing</keyword>
<keyword id="KW-1267">Proteomics identification</keyword>
<keyword id="KW-1185">Reference proteome</keyword>
<proteinExistence type="evidence at protein level"/>
<sequence length="158" mass="18145">MEIDGFQQLDLEKSVPSKKTTPKRIIHFVDGDIMEEYSTEEEEEEEKEEQSTNSTLDPSKLSWGPYLRFWAGRIASTSFSTCEFLGGRFAVFFGLTQPKYQYVLNEFYRIQNKKSDNKSERRGSKAQAAEVPNEKCHLEAGVQEYGTIQQDVTEAIPQ</sequence>
<feature type="chain" id="PRO_0000325915" description="Protein FAM177B">
    <location>
        <begin position="1"/>
        <end position="158"/>
    </location>
</feature>
<feature type="region of interest" description="Disordered" evidence="1">
    <location>
        <begin position="36"/>
        <end position="59"/>
    </location>
</feature>
<feature type="compositionally biased region" description="Acidic residues" evidence="1">
    <location>
        <begin position="36"/>
        <end position="48"/>
    </location>
</feature>
<feature type="splice variant" id="VSP_032476" description="In isoform 2." evidence="2">
    <original>TCEFLGGRFAVFFGLTQPKYQYVLNEFYRIQNKKSDNKSE</original>
    <variation>MLSLQATLLLKAEKEGLKQLLRSLSGCMEEFLMWVLVTLD</variation>
    <location>
        <begin position="81"/>
        <end position="120"/>
    </location>
</feature>
<feature type="splice variant" id="VSP_032477" description="In isoform 2." evidence="2">
    <location>
        <begin position="121"/>
        <end position="158"/>
    </location>
</feature>
<feature type="sequence variant" id="VAR_039953" description="In dbSNP:rs2378607.">
    <original>I</original>
    <variation>S</variation>
    <location>
        <position position="3"/>
    </location>
</feature>
<feature type="sequence variant" id="VAR_054090" description="In dbSNP:rs6683071.">
    <original>Q</original>
    <variation>R</variation>
    <location>
        <position position="143"/>
    </location>
</feature>
<gene>
    <name type="primary">FAM177B</name>
</gene>
<name>F177B_HUMAN</name>